<evidence type="ECO:0000255" key="1">
    <source>
        <dbReference type="HAMAP-Rule" id="MF_01157"/>
    </source>
</evidence>
<feature type="chain" id="PRO_1000065543" description="DnaA initiator-associating protein DiaA">
    <location>
        <begin position="1"/>
        <end position="196"/>
    </location>
</feature>
<feature type="domain" description="SIS" evidence="1">
    <location>
        <begin position="34"/>
        <end position="196"/>
    </location>
</feature>
<proteinExistence type="inferred from homology"/>
<dbReference type="EMBL" id="CP000653">
    <property type="protein sequence ID" value="ABP62244.1"/>
    <property type="molecule type" value="Genomic_DNA"/>
</dbReference>
<dbReference type="RefSeq" id="WP_015960570.1">
    <property type="nucleotide sequence ID" value="NC_009436.1"/>
</dbReference>
<dbReference type="SMR" id="A4WEW4"/>
<dbReference type="STRING" id="399742.Ent638_3586"/>
<dbReference type="KEGG" id="ent:Ent638_3586"/>
<dbReference type="eggNOG" id="COG0279">
    <property type="taxonomic scope" value="Bacteria"/>
</dbReference>
<dbReference type="HOGENOM" id="CLU_080999_3_1_6"/>
<dbReference type="OrthoDB" id="9810929at2"/>
<dbReference type="Proteomes" id="UP000000230">
    <property type="component" value="Chromosome"/>
</dbReference>
<dbReference type="GO" id="GO:0097367">
    <property type="term" value="F:carbohydrate derivative binding"/>
    <property type="evidence" value="ECO:0007669"/>
    <property type="project" value="InterPro"/>
</dbReference>
<dbReference type="GO" id="GO:1901135">
    <property type="term" value="P:carbohydrate derivative metabolic process"/>
    <property type="evidence" value="ECO:0007669"/>
    <property type="project" value="InterPro"/>
</dbReference>
<dbReference type="GO" id="GO:0006260">
    <property type="term" value="P:DNA replication"/>
    <property type="evidence" value="ECO:0007669"/>
    <property type="project" value="UniProtKB-UniRule"/>
</dbReference>
<dbReference type="CDD" id="cd05006">
    <property type="entry name" value="SIS_GmhA"/>
    <property type="match status" value="1"/>
</dbReference>
<dbReference type="FunFam" id="3.40.50.10490:FF:000006">
    <property type="entry name" value="DnaA initiator-associating protein DiaA"/>
    <property type="match status" value="1"/>
</dbReference>
<dbReference type="Gene3D" id="3.40.50.10490">
    <property type="entry name" value="Glucose-6-phosphate isomerase like protein, domain 1"/>
    <property type="match status" value="1"/>
</dbReference>
<dbReference type="HAMAP" id="MF_01157">
    <property type="entry name" value="SIS_DiaA"/>
    <property type="match status" value="1"/>
</dbReference>
<dbReference type="InterPro" id="IPR023070">
    <property type="entry name" value="DiaA"/>
</dbReference>
<dbReference type="InterPro" id="IPR035461">
    <property type="entry name" value="GmhA/DiaA"/>
</dbReference>
<dbReference type="InterPro" id="IPR001347">
    <property type="entry name" value="SIS_dom"/>
</dbReference>
<dbReference type="InterPro" id="IPR046348">
    <property type="entry name" value="SIS_dom_sf"/>
</dbReference>
<dbReference type="InterPro" id="IPR050099">
    <property type="entry name" value="SIS_GmhA/DiaA_subfam"/>
</dbReference>
<dbReference type="NCBIfam" id="NF008138">
    <property type="entry name" value="PRK10886.1"/>
    <property type="match status" value="1"/>
</dbReference>
<dbReference type="NCBIfam" id="NF010546">
    <property type="entry name" value="PRK13936.1"/>
    <property type="match status" value="1"/>
</dbReference>
<dbReference type="PANTHER" id="PTHR30390:SF6">
    <property type="entry name" value="DNAA INITIATOR-ASSOCIATING PROTEIN DIAA"/>
    <property type="match status" value="1"/>
</dbReference>
<dbReference type="PANTHER" id="PTHR30390">
    <property type="entry name" value="SEDOHEPTULOSE 7-PHOSPHATE ISOMERASE / DNAA INITIATOR-ASSOCIATING FACTOR FOR REPLICATION INITIATION"/>
    <property type="match status" value="1"/>
</dbReference>
<dbReference type="Pfam" id="PF13580">
    <property type="entry name" value="SIS_2"/>
    <property type="match status" value="1"/>
</dbReference>
<dbReference type="SUPFAM" id="SSF53697">
    <property type="entry name" value="SIS domain"/>
    <property type="match status" value="1"/>
</dbReference>
<dbReference type="PROSITE" id="PS51464">
    <property type="entry name" value="SIS"/>
    <property type="match status" value="1"/>
</dbReference>
<protein>
    <recommendedName>
        <fullName evidence="1">DnaA initiator-associating protein DiaA</fullName>
    </recommendedName>
</protein>
<reference key="1">
    <citation type="journal article" date="2010" name="PLoS Genet.">
        <title>Genome sequence of the plant growth promoting endophytic bacterium Enterobacter sp. 638.</title>
        <authorList>
            <person name="Taghavi S."/>
            <person name="van der Lelie D."/>
            <person name="Hoffman A."/>
            <person name="Zhang Y.B."/>
            <person name="Walla M.D."/>
            <person name="Vangronsveld J."/>
            <person name="Newman L."/>
            <person name="Monchy S."/>
        </authorList>
    </citation>
    <scope>NUCLEOTIDE SEQUENCE [LARGE SCALE GENOMIC DNA]</scope>
    <source>
        <strain>638</strain>
    </source>
</reference>
<name>DIAA_ENT38</name>
<organism>
    <name type="scientific">Enterobacter sp. (strain 638)</name>
    <dbReference type="NCBI Taxonomy" id="399742"/>
    <lineage>
        <taxon>Bacteria</taxon>
        <taxon>Pseudomonadati</taxon>
        <taxon>Pseudomonadota</taxon>
        <taxon>Gammaproteobacteria</taxon>
        <taxon>Enterobacterales</taxon>
        <taxon>Enterobacteriaceae</taxon>
        <taxon>Enterobacter</taxon>
    </lineage>
</organism>
<gene>
    <name evidence="1" type="primary">diaA</name>
    <name type="ordered locus">Ent638_3586</name>
</gene>
<sequence>MLERIKVCFTESIQTQIAAAEALPEAISRAAMTLVQSLLNGNKILCCGNGTSAANAQHFAASMINRFETERPSLPAIALNTDNVVLTAIANDRLHDEIYAKQVRALGHAGDILLAISTRGNSRDIVKAVEAAVTRDMTIVALTGYDGGELAGLLGPQDVEIRIPSHRSARIQEMHMLTVNCLCDLIDNTLFPHQDD</sequence>
<keyword id="KW-0235">DNA replication</keyword>
<accession>A4WEW4</accession>
<comment type="function">
    <text evidence="1">Required for the timely initiation of chromosomal replication via direct interactions with the DnaA initiator protein.</text>
</comment>
<comment type="subunit">
    <text evidence="1">Homotetramer; dimer of dimers.</text>
</comment>
<comment type="similarity">
    <text evidence="1">Belongs to the SIS family. DiaA subfamily.</text>
</comment>